<proteinExistence type="inferred from homology"/>
<protein>
    <recommendedName>
        <fullName evidence="1">Glutamate-1-semialdehyde 2,1-aminomutase</fullName>
        <shortName evidence="1">GSA</shortName>
        <ecNumber evidence="1">5.4.3.8</ecNumber>
    </recommendedName>
    <alternativeName>
        <fullName evidence="1">Glutamate-1-semialdehyde aminotransferase</fullName>
        <shortName evidence="1">GSA-AT</shortName>
    </alternativeName>
</protein>
<feature type="chain" id="PRO_1000121861" description="Glutamate-1-semialdehyde 2,1-aminomutase">
    <location>
        <begin position="1"/>
        <end position="427"/>
    </location>
</feature>
<feature type="modified residue" description="N6-(pyridoxal phosphate)lysine" evidence="1">
    <location>
        <position position="265"/>
    </location>
</feature>
<comment type="catalytic activity">
    <reaction evidence="1">
        <text>(S)-4-amino-5-oxopentanoate = 5-aminolevulinate</text>
        <dbReference type="Rhea" id="RHEA:14265"/>
        <dbReference type="ChEBI" id="CHEBI:57501"/>
        <dbReference type="ChEBI" id="CHEBI:356416"/>
        <dbReference type="EC" id="5.4.3.8"/>
    </reaction>
</comment>
<comment type="cofactor">
    <cofactor evidence="1">
        <name>pyridoxal 5'-phosphate</name>
        <dbReference type="ChEBI" id="CHEBI:597326"/>
    </cofactor>
</comment>
<comment type="pathway">
    <text evidence="1">Porphyrin-containing compound metabolism; protoporphyrin-IX biosynthesis; 5-aminolevulinate from L-glutamyl-tRNA(Glu): step 2/2.</text>
</comment>
<comment type="subunit">
    <text evidence="1">Homodimer.</text>
</comment>
<comment type="subcellular location">
    <subcellularLocation>
        <location evidence="1">Cytoplasm</location>
    </subcellularLocation>
</comment>
<comment type="similarity">
    <text evidence="1">Belongs to the class-III pyridoxal-phosphate-dependent aminotransferase family. HemL subfamily.</text>
</comment>
<keyword id="KW-0963">Cytoplasm</keyword>
<keyword id="KW-0413">Isomerase</keyword>
<keyword id="KW-0627">Porphyrin biosynthesis</keyword>
<keyword id="KW-0663">Pyridoxal phosphate</keyword>
<keyword id="KW-1185">Reference proteome</keyword>
<reference key="1">
    <citation type="submission" date="2007-10" db="EMBL/GenBank/DDBJ databases">
        <title>Complete sequence of chromosome 1 of Burkholderia multivorans ATCC 17616.</title>
        <authorList>
            <person name="Copeland A."/>
            <person name="Lucas S."/>
            <person name="Lapidus A."/>
            <person name="Barry K."/>
            <person name="Glavina del Rio T."/>
            <person name="Dalin E."/>
            <person name="Tice H."/>
            <person name="Pitluck S."/>
            <person name="Chain P."/>
            <person name="Malfatti S."/>
            <person name="Shin M."/>
            <person name="Vergez L."/>
            <person name="Schmutz J."/>
            <person name="Larimer F."/>
            <person name="Land M."/>
            <person name="Hauser L."/>
            <person name="Kyrpides N."/>
            <person name="Kim E."/>
            <person name="Tiedje J."/>
            <person name="Richardson P."/>
        </authorList>
    </citation>
    <scope>NUCLEOTIDE SEQUENCE [LARGE SCALE GENOMIC DNA]</scope>
    <source>
        <strain>ATCC 17616 / 249</strain>
    </source>
</reference>
<reference key="2">
    <citation type="submission" date="2007-04" db="EMBL/GenBank/DDBJ databases">
        <title>Complete genome sequence of Burkholderia multivorans ATCC 17616.</title>
        <authorList>
            <person name="Ohtsubo Y."/>
            <person name="Yamashita A."/>
            <person name="Kurokawa K."/>
            <person name="Takami H."/>
            <person name="Yuhara S."/>
            <person name="Nishiyama E."/>
            <person name="Endo R."/>
            <person name="Miyazaki R."/>
            <person name="Ono A."/>
            <person name="Yano K."/>
            <person name="Ito M."/>
            <person name="Sota M."/>
            <person name="Yuji N."/>
            <person name="Hattori M."/>
            <person name="Tsuda M."/>
        </authorList>
    </citation>
    <scope>NUCLEOTIDE SEQUENCE [LARGE SCALE GENOMIC DNA]</scope>
    <source>
        <strain>ATCC 17616 / 249</strain>
    </source>
</reference>
<accession>A9AEU0</accession>
<dbReference type="EC" id="5.4.3.8" evidence="1"/>
<dbReference type="EMBL" id="CP000868">
    <property type="protein sequence ID" value="ABX16121.1"/>
    <property type="molecule type" value="Genomic_DNA"/>
</dbReference>
<dbReference type="EMBL" id="AP009385">
    <property type="protein sequence ID" value="BAG42757.1"/>
    <property type="molecule type" value="Genomic_DNA"/>
</dbReference>
<dbReference type="RefSeq" id="WP_012213939.1">
    <property type="nucleotide sequence ID" value="NC_010084.1"/>
</dbReference>
<dbReference type="SMR" id="A9AEU0"/>
<dbReference type="STRING" id="395019.BMULJ_00797"/>
<dbReference type="KEGG" id="bmj:BMULJ_00797"/>
<dbReference type="KEGG" id="bmu:Bmul_2436"/>
<dbReference type="eggNOG" id="COG0001">
    <property type="taxonomic scope" value="Bacteria"/>
</dbReference>
<dbReference type="HOGENOM" id="CLU_016922_1_5_4"/>
<dbReference type="UniPathway" id="UPA00251">
    <property type="reaction ID" value="UER00317"/>
</dbReference>
<dbReference type="Proteomes" id="UP000008815">
    <property type="component" value="Chromosome 1"/>
</dbReference>
<dbReference type="GO" id="GO:0005737">
    <property type="term" value="C:cytoplasm"/>
    <property type="evidence" value="ECO:0007669"/>
    <property type="project" value="UniProtKB-SubCell"/>
</dbReference>
<dbReference type="GO" id="GO:0042286">
    <property type="term" value="F:glutamate-1-semialdehyde 2,1-aminomutase activity"/>
    <property type="evidence" value="ECO:0007669"/>
    <property type="project" value="UniProtKB-UniRule"/>
</dbReference>
<dbReference type="GO" id="GO:0030170">
    <property type="term" value="F:pyridoxal phosphate binding"/>
    <property type="evidence" value="ECO:0007669"/>
    <property type="project" value="InterPro"/>
</dbReference>
<dbReference type="GO" id="GO:0008483">
    <property type="term" value="F:transaminase activity"/>
    <property type="evidence" value="ECO:0007669"/>
    <property type="project" value="InterPro"/>
</dbReference>
<dbReference type="GO" id="GO:0006782">
    <property type="term" value="P:protoporphyrinogen IX biosynthetic process"/>
    <property type="evidence" value="ECO:0007669"/>
    <property type="project" value="UniProtKB-UniRule"/>
</dbReference>
<dbReference type="CDD" id="cd00610">
    <property type="entry name" value="OAT_like"/>
    <property type="match status" value="1"/>
</dbReference>
<dbReference type="FunFam" id="3.40.640.10:FF:000021">
    <property type="entry name" value="Glutamate-1-semialdehyde 2,1-aminomutase"/>
    <property type="match status" value="1"/>
</dbReference>
<dbReference type="Gene3D" id="3.90.1150.10">
    <property type="entry name" value="Aspartate Aminotransferase, domain 1"/>
    <property type="match status" value="1"/>
</dbReference>
<dbReference type="Gene3D" id="3.40.640.10">
    <property type="entry name" value="Type I PLP-dependent aspartate aminotransferase-like (Major domain)"/>
    <property type="match status" value="1"/>
</dbReference>
<dbReference type="HAMAP" id="MF_00375">
    <property type="entry name" value="HemL_aminotrans_3"/>
    <property type="match status" value="1"/>
</dbReference>
<dbReference type="InterPro" id="IPR004639">
    <property type="entry name" value="4pyrrol_synth_GluAld_NH2Trfase"/>
</dbReference>
<dbReference type="InterPro" id="IPR005814">
    <property type="entry name" value="Aminotrans_3"/>
</dbReference>
<dbReference type="InterPro" id="IPR049704">
    <property type="entry name" value="Aminotrans_3_PPA_site"/>
</dbReference>
<dbReference type="InterPro" id="IPR015424">
    <property type="entry name" value="PyrdxlP-dep_Trfase"/>
</dbReference>
<dbReference type="InterPro" id="IPR015421">
    <property type="entry name" value="PyrdxlP-dep_Trfase_major"/>
</dbReference>
<dbReference type="InterPro" id="IPR015422">
    <property type="entry name" value="PyrdxlP-dep_Trfase_small"/>
</dbReference>
<dbReference type="NCBIfam" id="TIGR00713">
    <property type="entry name" value="hemL"/>
    <property type="match status" value="1"/>
</dbReference>
<dbReference type="NCBIfam" id="NF000818">
    <property type="entry name" value="PRK00062.1"/>
    <property type="match status" value="1"/>
</dbReference>
<dbReference type="PANTHER" id="PTHR43713">
    <property type="entry name" value="GLUTAMATE-1-SEMIALDEHYDE 2,1-AMINOMUTASE"/>
    <property type="match status" value="1"/>
</dbReference>
<dbReference type="PANTHER" id="PTHR43713:SF3">
    <property type="entry name" value="GLUTAMATE-1-SEMIALDEHYDE 2,1-AMINOMUTASE 1, CHLOROPLASTIC-RELATED"/>
    <property type="match status" value="1"/>
</dbReference>
<dbReference type="Pfam" id="PF00202">
    <property type="entry name" value="Aminotran_3"/>
    <property type="match status" value="1"/>
</dbReference>
<dbReference type="SUPFAM" id="SSF53383">
    <property type="entry name" value="PLP-dependent transferases"/>
    <property type="match status" value="1"/>
</dbReference>
<dbReference type="PROSITE" id="PS00600">
    <property type="entry name" value="AA_TRANSFER_CLASS_3"/>
    <property type="match status" value="1"/>
</dbReference>
<gene>
    <name evidence="1" type="primary">hemL</name>
    <name type="ordered locus">Bmul_2436</name>
    <name type="ordered locus">BMULJ_00797</name>
</gene>
<evidence type="ECO:0000255" key="1">
    <source>
        <dbReference type="HAMAP-Rule" id="MF_00375"/>
    </source>
</evidence>
<organism>
    <name type="scientific">Burkholderia multivorans (strain ATCC 17616 / 249)</name>
    <dbReference type="NCBI Taxonomy" id="395019"/>
    <lineage>
        <taxon>Bacteria</taxon>
        <taxon>Pseudomonadati</taxon>
        <taxon>Pseudomonadota</taxon>
        <taxon>Betaproteobacteria</taxon>
        <taxon>Burkholderiales</taxon>
        <taxon>Burkholderiaceae</taxon>
        <taxon>Burkholderia</taxon>
        <taxon>Burkholderia cepacia complex</taxon>
    </lineage>
</organism>
<name>GSA_BURM1</name>
<sequence length="427" mass="44924">MSNNQILFERAQKTIPGGVNSPVRAFRSVGGTPRFVARAQGPYFWDADGKQYIDYIGSWGPMIVGHVHPEVLDAVQKVLADGFSFGAPTEAEIEIAEEICKLVPSIEQVRMVSSGTEATMSALRLARGFTGRSRIVKFEGCYHGHADSLLVKAGSGLLTFGNPTSAGVPADIAKHTTVLEYNNVAALEEAFGAFGDEIAAVIVEPVAGNMNLVRGTPEFLNALRALCTKHGAVLIFDEVMCGFRVALGGAQAHYGIAADLTCLGKVIGGGMPAAAFGGRRDIMAHLAPLGGVYQAGTLSGNPIAVAAGLKTLQLIQAPGFYEALTAQTKRLADGLAAEARAAGVPFAADSIGAMFGLYFAERVPTSFAEVTKSDIERFNRFFHLMLDEGVYFAPSAYEAGFVSSTHDDAVIDATLAAARRAFAALAA</sequence>